<organism>
    <name type="scientific">Streptomyces avermitilis (strain ATCC 31267 / DSM 46492 / JCM 5070 / NBRC 14893 / NCIMB 12804 / NRRL 8165 / MA-4680)</name>
    <dbReference type="NCBI Taxonomy" id="227882"/>
    <lineage>
        <taxon>Bacteria</taxon>
        <taxon>Bacillati</taxon>
        <taxon>Actinomycetota</taxon>
        <taxon>Actinomycetes</taxon>
        <taxon>Kitasatosporales</taxon>
        <taxon>Streptomycetaceae</taxon>
        <taxon>Streptomyces</taxon>
    </lineage>
</organism>
<keyword id="KW-0066">ATP synthesis</keyword>
<keyword id="KW-0067">ATP-binding</keyword>
<keyword id="KW-1003">Cell membrane</keyword>
<keyword id="KW-0139">CF(1)</keyword>
<keyword id="KW-0375">Hydrogen ion transport</keyword>
<keyword id="KW-0406">Ion transport</keyword>
<keyword id="KW-0472">Membrane</keyword>
<keyword id="KW-0547">Nucleotide-binding</keyword>
<keyword id="KW-1185">Reference proteome</keyword>
<keyword id="KW-1278">Translocase</keyword>
<keyword id="KW-0813">Transport</keyword>
<comment type="function">
    <text evidence="1">Produces ATP from ADP in the presence of a proton gradient across the membrane. The catalytic sites are hosted primarily by the beta subunits.</text>
</comment>
<comment type="catalytic activity">
    <reaction evidence="1">
        <text>ATP + H2O + 4 H(+)(in) = ADP + phosphate + 5 H(+)(out)</text>
        <dbReference type="Rhea" id="RHEA:57720"/>
        <dbReference type="ChEBI" id="CHEBI:15377"/>
        <dbReference type="ChEBI" id="CHEBI:15378"/>
        <dbReference type="ChEBI" id="CHEBI:30616"/>
        <dbReference type="ChEBI" id="CHEBI:43474"/>
        <dbReference type="ChEBI" id="CHEBI:456216"/>
        <dbReference type="EC" id="7.1.2.2"/>
    </reaction>
</comment>
<comment type="subunit">
    <text evidence="1">F-type ATPases have 2 components, CF(1) - the catalytic core - and CF(0) - the membrane proton channel. CF(1) has five subunits: alpha(3), beta(3), gamma(1), delta(1), epsilon(1). CF(0) has three main subunits: a(1), b(2) and c(9-12). The alpha and beta chains form an alternating ring which encloses part of the gamma chain. CF(1) is attached to CF(0) by a central stalk formed by the gamma and epsilon chains, while a peripheral stalk is formed by the delta and b chains.</text>
</comment>
<comment type="subcellular location">
    <subcellularLocation>
        <location evidence="1">Cell membrane</location>
        <topology evidence="1">Peripheral membrane protein</topology>
    </subcellularLocation>
</comment>
<comment type="similarity">
    <text evidence="1">Belongs to the ATPase alpha/beta chains family.</text>
</comment>
<dbReference type="EC" id="7.1.2.2" evidence="1"/>
<dbReference type="EMBL" id="BA000030">
    <property type="protein sequence ID" value="BAC70592.1"/>
    <property type="molecule type" value="Genomic_DNA"/>
</dbReference>
<dbReference type="RefSeq" id="WP_010984313.1">
    <property type="nucleotide sequence ID" value="NZ_JZJK01000041.1"/>
</dbReference>
<dbReference type="SMR" id="Q82J84"/>
<dbReference type="GeneID" id="41539967"/>
<dbReference type="KEGG" id="sma:SAVERM_2881"/>
<dbReference type="eggNOG" id="COG0055">
    <property type="taxonomic scope" value="Bacteria"/>
</dbReference>
<dbReference type="HOGENOM" id="CLU_022398_0_2_11"/>
<dbReference type="OrthoDB" id="9801639at2"/>
<dbReference type="Proteomes" id="UP000000428">
    <property type="component" value="Chromosome"/>
</dbReference>
<dbReference type="GO" id="GO:0005886">
    <property type="term" value="C:plasma membrane"/>
    <property type="evidence" value="ECO:0007669"/>
    <property type="project" value="UniProtKB-SubCell"/>
</dbReference>
<dbReference type="GO" id="GO:0045259">
    <property type="term" value="C:proton-transporting ATP synthase complex"/>
    <property type="evidence" value="ECO:0007669"/>
    <property type="project" value="UniProtKB-KW"/>
</dbReference>
<dbReference type="GO" id="GO:0005524">
    <property type="term" value="F:ATP binding"/>
    <property type="evidence" value="ECO:0007669"/>
    <property type="project" value="UniProtKB-UniRule"/>
</dbReference>
<dbReference type="GO" id="GO:0016887">
    <property type="term" value="F:ATP hydrolysis activity"/>
    <property type="evidence" value="ECO:0007669"/>
    <property type="project" value="InterPro"/>
</dbReference>
<dbReference type="GO" id="GO:0046933">
    <property type="term" value="F:proton-transporting ATP synthase activity, rotational mechanism"/>
    <property type="evidence" value="ECO:0007669"/>
    <property type="project" value="UniProtKB-UniRule"/>
</dbReference>
<dbReference type="CDD" id="cd18110">
    <property type="entry name" value="ATP-synt_F1_beta_C"/>
    <property type="match status" value="1"/>
</dbReference>
<dbReference type="CDD" id="cd18115">
    <property type="entry name" value="ATP-synt_F1_beta_N"/>
    <property type="match status" value="1"/>
</dbReference>
<dbReference type="CDD" id="cd01133">
    <property type="entry name" value="F1-ATPase_beta_CD"/>
    <property type="match status" value="1"/>
</dbReference>
<dbReference type="FunFam" id="1.10.1140.10:FF:000001">
    <property type="entry name" value="ATP synthase subunit beta"/>
    <property type="match status" value="1"/>
</dbReference>
<dbReference type="FunFam" id="2.40.10.170:FF:000005">
    <property type="entry name" value="ATP synthase subunit beta"/>
    <property type="match status" value="1"/>
</dbReference>
<dbReference type="FunFam" id="3.40.50.300:FF:000004">
    <property type="entry name" value="ATP synthase subunit beta"/>
    <property type="match status" value="1"/>
</dbReference>
<dbReference type="Gene3D" id="2.40.10.170">
    <property type="match status" value="1"/>
</dbReference>
<dbReference type="Gene3D" id="1.10.1140.10">
    <property type="entry name" value="Bovine Mitochondrial F1-atpase, Atp Synthase Beta Chain, Chain D, domain 3"/>
    <property type="match status" value="1"/>
</dbReference>
<dbReference type="Gene3D" id="3.40.50.300">
    <property type="entry name" value="P-loop containing nucleotide triphosphate hydrolases"/>
    <property type="match status" value="1"/>
</dbReference>
<dbReference type="HAMAP" id="MF_01347">
    <property type="entry name" value="ATP_synth_beta_bact"/>
    <property type="match status" value="1"/>
</dbReference>
<dbReference type="InterPro" id="IPR003593">
    <property type="entry name" value="AAA+_ATPase"/>
</dbReference>
<dbReference type="InterPro" id="IPR055190">
    <property type="entry name" value="ATP-synt_VA_C"/>
</dbReference>
<dbReference type="InterPro" id="IPR005722">
    <property type="entry name" value="ATP_synth_F1_bsu"/>
</dbReference>
<dbReference type="InterPro" id="IPR020003">
    <property type="entry name" value="ATPase_a/bsu_AS"/>
</dbReference>
<dbReference type="InterPro" id="IPR050053">
    <property type="entry name" value="ATPase_alpha/beta_chains"/>
</dbReference>
<dbReference type="InterPro" id="IPR004100">
    <property type="entry name" value="ATPase_F1/V1/A1_a/bsu_N"/>
</dbReference>
<dbReference type="InterPro" id="IPR036121">
    <property type="entry name" value="ATPase_F1/V1/A1_a/bsu_N_sf"/>
</dbReference>
<dbReference type="InterPro" id="IPR000194">
    <property type="entry name" value="ATPase_F1/V1/A1_a/bsu_nucl-bd"/>
</dbReference>
<dbReference type="InterPro" id="IPR024034">
    <property type="entry name" value="ATPase_F1/V1_b/a_C"/>
</dbReference>
<dbReference type="InterPro" id="IPR027417">
    <property type="entry name" value="P-loop_NTPase"/>
</dbReference>
<dbReference type="NCBIfam" id="TIGR01039">
    <property type="entry name" value="atpD"/>
    <property type="match status" value="1"/>
</dbReference>
<dbReference type="PANTHER" id="PTHR15184">
    <property type="entry name" value="ATP SYNTHASE"/>
    <property type="match status" value="1"/>
</dbReference>
<dbReference type="PANTHER" id="PTHR15184:SF71">
    <property type="entry name" value="ATP SYNTHASE SUBUNIT BETA, MITOCHONDRIAL"/>
    <property type="match status" value="1"/>
</dbReference>
<dbReference type="Pfam" id="PF00006">
    <property type="entry name" value="ATP-synt_ab"/>
    <property type="match status" value="1"/>
</dbReference>
<dbReference type="Pfam" id="PF02874">
    <property type="entry name" value="ATP-synt_ab_N"/>
    <property type="match status" value="1"/>
</dbReference>
<dbReference type="Pfam" id="PF22919">
    <property type="entry name" value="ATP-synt_VA_C"/>
    <property type="match status" value="1"/>
</dbReference>
<dbReference type="SMART" id="SM00382">
    <property type="entry name" value="AAA"/>
    <property type="match status" value="1"/>
</dbReference>
<dbReference type="SUPFAM" id="SSF47917">
    <property type="entry name" value="C-terminal domain of alpha and beta subunits of F1 ATP synthase"/>
    <property type="match status" value="1"/>
</dbReference>
<dbReference type="SUPFAM" id="SSF50615">
    <property type="entry name" value="N-terminal domain of alpha and beta subunits of F1 ATP synthase"/>
    <property type="match status" value="1"/>
</dbReference>
<dbReference type="SUPFAM" id="SSF52540">
    <property type="entry name" value="P-loop containing nucleoside triphosphate hydrolases"/>
    <property type="match status" value="1"/>
</dbReference>
<dbReference type="PROSITE" id="PS00152">
    <property type="entry name" value="ATPASE_ALPHA_BETA"/>
    <property type="match status" value="1"/>
</dbReference>
<evidence type="ECO:0000255" key="1">
    <source>
        <dbReference type="HAMAP-Rule" id="MF_01347"/>
    </source>
</evidence>
<sequence length="478" mass="52173">MTTTVETAVATGRVARVIGPVVDVEFPVDAMPDMYNALHVEVADPANAGEKKTLTLEVAQHLGDGLVRTISMQPTDGLVRQAAVTDTGTGITVPVGDFTKGKVFNTLGEVLNVDEKYDGERWSIHRKAPRFDELESKTEMFETGVKVIDLLTPYVKGGKIGLFGGAGVGKTVLIQEMIYRVANNHDGVSVFAGVGERTREGNDLIEEMSDSGVIDKTALVFGQMDEPPGTRLRVALAGLTMAEYFRDVQKQDVLFFIDNIFRFTQAGSEVSTLLGRMPSAVGYQPNLADEMGLLQERITSTRGHSITSMQAIYVPADDLTDPAPATTFAHLDATTVLSRPISEKGIYPAVDPLDSTSRILDPRYIAQDHYDAAMRVKTVLQKYKDLQDIIAILGIDELGEEDKLVVHRARRVERFLSQNTHVAKQFTGVDGSDVPLDESITAFNAIIDGEYDHFPEQAFFMCGGIEDLKANAKELGVS</sequence>
<gene>
    <name evidence="1" type="primary">atpD</name>
    <name type="ordered locus">SAV_2881</name>
</gene>
<feature type="chain" id="PRO_0000254402" description="ATP synthase subunit beta">
    <location>
        <begin position="1"/>
        <end position="478"/>
    </location>
</feature>
<feature type="binding site" evidence="1">
    <location>
        <begin position="164"/>
        <end position="171"/>
    </location>
    <ligand>
        <name>ATP</name>
        <dbReference type="ChEBI" id="CHEBI:30616"/>
    </ligand>
</feature>
<accession>Q82J84</accession>
<protein>
    <recommendedName>
        <fullName evidence="1">ATP synthase subunit beta</fullName>
        <ecNumber evidence="1">7.1.2.2</ecNumber>
    </recommendedName>
    <alternativeName>
        <fullName evidence="1">ATP synthase F1 sector subunit beta</fullName>
    </alternativeName>
    <alternativeName>
        <fullName evidence="1">F-ATPase subunit beta</fullName>
    </alternativeName>
</protein>
<proteinExistence type="inferred from homology"/>
<reference key="1">
    <citation type="journal article" date="2001" name="Proc. Natl. Acad. Sci. U.S.A.">
        <title>Genome sequence of an industrial microorganism Streptomyces avermitilis: deducing the ability of producing secondary metabolites.</title>
        <authorList>
            <person name="Omura S."/>
            <person name="Ikeda H."/>
            <person name="Ishikawa J."/>
            <person name="Hanamoto A."/>
            <person name="Takahashi C."/>
            <person name="Shinose M."/>
            <person name="Takahashi Y."/>
            <person name="Horikawa H."/>
            <person name="Nakazawa H."/>
            <person name="Osonoe T."/>
            <person name="Kikuchi H."/>
            <person name="Shiba T."/>
            <person name="Sakaki Y."/>
            <person name="Hattori M."/>
        </authorList>
    </citation>
    <scope>NUCLEOTIDE SEQUENCE [LARGE SCALE GENOMIC DNA]</scope>
    <source>
        <strain>ATCC 31267 / DSM 46492 / JCM 5070 / NBRC 14893 / NCIMB 12804 / NRRL 8165 / MA-4680</strain>
    </source>
</reference>
<reference key="2">
    <citation type="journal article" date="2003" name="Nat. Biotechnol.">
        <title>Complete genome sequence and comparative analysis of the industrial microorganism Streptomyces avermitilis.</title>
        <authorList>
            <person name="Ikeda H."/>
            <person name="Ishikawa J."/>
            <person name="Hanamoto A."/>
            <person name="Shinose M."/>
            <person name="Kikuchi H."/>
            <person name="Shiba T."/>
            <person name="Sakaki Y."/>
            <person name="Hattori M."/>
            <person name="Omura S."/>
        </authorList>
    </citation>
    <scope>NUCLEOTIDE SEQUENCE [LARGE SCALE GENOMIC DNA]</scope>
    <source>
        <strain>ATCC 31267 / DSM 46492 / JCM 5070 / NBRC 14893 / NCIMB 12804 / NRRL 8165 / MA-4680</strain>
    </source>
</reference>
<name>ATPB_STRAW</name>